<accession>B0JVY2</accession>
<proteinExistence type="inferred from homology"/>
<dbReference type="EC" id="6.3.5.-" evidence="1"/>
<dbReference type="EMBL" id="AP009552">
    <property type="protein sequence ID" value="BAG04725.1"/>
    <property type="molecule type" value="Genomic_DNA"/>
</dbReference>
<dbReference type="RefSeq" id="WP_012267377.1">
    <property type="nucleotide sequence ID" value="NC_010296.1"/>
</dbReference>
<dbReference type="SMR" id="B0JVY2"/>
<dbReference type="STRING" id="449447.MAE_49030"/>
<dbReference type="PaxDb" id="449447-MAE_49030"/>
<dbReference type="EnsemblBacteria" id="BAG04725">
    <property type="protein sequence ID" value="BAG04725"/>
    <property type="gene ID" value="MAE_49030"/>
</dbReference>
<dbReference type="KEGG" id="mar:MAE_49030"/>
<dbReference type="PATRIC" id="fig|449447.4.peg.4464"/>
<dbReference type="eggNOG" id="COG0721">
    <property type="taxonomic scope" value="Bacteria"/>
</dbReference>
<dbReference type="HOGENOM" id="CLU_105899_2_0_3"/>
<dbReference type="BioCyc" id="MAER449447:MAE_RS21295-MONOMER"/>
<dbReference type="Proteomes" id="UP000001510">
    <property type="component" value="Chromosome"/>
</dbReference>
<dbReference type="GO" id="GO:0050566">
    <property type="term" value="F:asparaginyl-tRNA synthase (glutamine-hydrolyzing) activity"/>
    <property type="evidence" value="ECO:0007669"/>
    <property type="project" value="RHEA"/>
</dbReference>
<dbReference type="GO" id="GO:0005524">
    <property type="term" value="F:ATP binding"/>
    <property type="evidence" value="ECO:0007669"/>
    <property type="project" value="UniProtKB-KW"/>
</dbReference>
<dbReference type="GO" id="GO:0050567">
    <property type="term" value="F:glutaminyl-tRNA synthase (glutamine-hydrolyzing) activity"/>
    <property type="evidence" value="ECO:0007669"/>
    <property type="project" value="UniProtKB-UniRule"/>
</dbReference>
<dbReference type="GO" id="GO:0070681">
    <property type="term" value="P:glutaminyl-tRNAGln biosynthesis via transamidation"/>
    <property type="evidence" value="ECO:0007669"/>
    <property type="project" value="TreeGrafter"/>
</dbReference>
<dbReference type="GO" id="GO:0006450">
    <property type="term" value="P:regulation of translational fidelity"/>
    <property type="evidence" value="ECO:0007669"/>
    <property type="project" value="InterPro"/>
</dbReference>
<dbReference type="GO" id="GO:0006412">
    <property type="term" value="P:translation"/>
    <property type="evidence" value="ECO:0007669"/>
    <property type="project" value="UniProtKB-UniRule"/>
</dbReference>
<dbReference type="Gene3D" id="1.10.20.60">
    <property type="entry name" value="Glu-tRNAGln amidotransferase C subunit, N-terminal domain"/>
    <property type="match status" value="1"/>
</dbReference>
<dbReference type="HAMAP" id="MF_00122">
    <property type="entry name" value="GatC"/>
    <property type="match status" value="1"/>
</dbReference>
<dbReference type="InterPro" id="IPR036113">
    <property type="entry name" value="Asp/Glu-ADT_sf_sub_c"/>
</dbReference>
<dbReference type="InterPro" id="IPR003837">
    <property type="entry name" value="GatC"/>
</dbReference>
<dbReference type="NCBIfam" id="TIGR00135">
    <property type="entry name" value="gatC"/>
    <property type="match status" value="1"/>
</dbReference>
<dbReference type="PANTHER" id="PTHR15004">
    <property type="entry name" value="GLUTAMYL-TRNA(GLN) AMIDOTRANSFERASE SUBUNIT C, MITOCHONDRIAL"/>
    <property type="match status" value="1"/>
</dbReference>
<dbReference type="PANTHER" id="PTHR15004:SF0">
    <property type="entry name" value="GLUTAMYL-TRNA(GLN) AMIDOTRANSFERASE SUBUNIT C, MITOCHONDRIAL"/>
    <property type="match status" value="1"/>
</dbReference>
<dbReference type="Pfam" id="PF02686">
    <property type="entry name" value="GatC"/>
    <property type="match status" value="1"/>
</dbReference>
<dbReference type="SUPFAM" id="SSF141000">
    <property type="entry name" value="Glu-tRNAGln amidotransferase C subunit"/>
    <property type="match status" value="1"/>
</dbReference>
<gene>
    <name evidence="1" type="primary">gatC</name>
    <name type="ordered locus">MAE_49030</name>
</gene>
<feature type="chain" id="PRO_1000076188" description="Aspartyl/glutamyl-tRNA(Asn/Gln) amidotransferase subunit C">
    <location>
        <begin position="1"/>
        <end position="98"/>
    </location>
</feature>
<reference key="1">
    <citation type="journal article" date="2007" name="DNA Res.">
        <title>Complete genomic structure of the bloom-forming toxic cyanobacterium Microcystis aeruginosa NIES-843.</title>
        <authorList>
            <person name="Kaneko T."/>
            <person name="Nakajima N."/>
            <person name="Okamoto S."/>
            <person name="Suzuki I."/>
            <person name="Tanabe Y."/>
            <person name="Tamaoki M."/>
            <person name="Nakamura Y."/>
            <person name="Kasai F."/>
            <person name="Watanabe A."/>
            <person name="Kawashima K."/>
            <person name="Kishida Y."/>
            <person name="Ono A."/>
            <person name="Shimizu Y."/>
            <person name="Takahashi C."/>
            <person name="Minami C."/>
            <person name="Fujishiro T."/>
            <person name="Kohara M."/>
            <person name="Katoh M."/>
            <person name="Nakazaki N."/>
            <person name="Nakayama S."/>
            <person name="Yamada M."/>
            <person name="Tabata S."/>
            <person name="Watanabe M.M."/>
        </authorList>
    </citation>
    <scope>NUCLEOTIDE SEQUENCE [LARGE SCALE GENOMIC DNA]</scope>
    <source>
        <strain>NIES-843 / IAM M-247</strain>
    </source>
</reference>
<name>GATC_MICAN</name>
<keyword id="KW-0067">ATP-binding</keyword>
<keyword id="KW-0436">Ligase</keyword>
<keyword id="KW-0547">Nucleotide-binding</keyword>
<keyword id="KW-0648">Protein biosynthesis</keyword>
<protein>
    <recommendedName>
        <fullName evidence="1">Aspartyl/glutamyl-tRNA(Asn/Gln) amidotransferase subunit C</fullName>
        <shortName evidence="1">Asp/Glu-ADT subunit C</shortName>
        <ecNumber evidence="1">6.3.5.-</ecNumber>
    </recommendedName>
</protein>
<organism>
    <name type="scientific">Microcystis aeruginosa (strain NIES-843 / IAM M-2473)</name>
    <dbReference type="NCBI Taxonomy" id="449447"/>
    <lineage>
        <taxon>Bacteria</taxon>
        <taxon>Bacillati</taxon>
        <taxon>Cyanobacteriota</taxon>
        <taxon>Cyanophyceae</taxon>
        <taxon>Oscillatoriophycideae</taxon>
        <taxon>Chroococcales</taxon>
        <taxon>Microcystaceae</taxon>
        <taxon>Microcystis</taxon>
    </lineage>
</organism>
<sequence length="98" mass="11185">MIDRATVEKIAHLARLEINSGEEEQFALQLSGILDYFEQLSELDTENVLPTTRAIEIQNITRADSNRLYPDHEVLVQESPAPEGDYFLVPRILNTDED</sequence>
<evidence type="ECO:0000255" key="1">
    <source>
        <dbReference type="HAMAP-Rule" id="MF_00122"/>
    </source>
</evidence>
<comment type="function">
    <text evidence="1">Allows the formation of correctly charged Asn-tRNA(Asn) or Gln-tRNA(Gln) through the transamidation of misacylated Asp-tRNA(Asn) or Glu-tRNA(Gln) in organisms which lack either or both of asparaginyl-tRNA or glutaminyl-tRNA synthetases. The reaction takes place in the presence of glutamine and ATP through an activated phospho-Asp-tRNA(Asn) or phospho-Glu-tRNA(Gln).</text>
</comment>
<comment type="catalytic activity">
    <reaction evidence="1">
        <text>L-glutamyl-tRNA(Gln) + L-glutamine + ATP + H2O = L-glutaminyl-tRNA(Gln) + L-glutamate + ADP + phosphate + H(+)</text>
        <dbReference type="Rhea" id="RHEA:17521"/>
        <dbReference type="Rhea" id="RHEA-COMP:9681"/>
        <dbReference type="Rhea" id="RHEA-COMP:9684"/>
        <dbReference type="ChEBI" id="CHEBI:15377"/>
        <dbReference type="ChEBI" id="CHEBI:15378"/>
        <dbReference type="ChEBI" id="CHEBI:29985"/>
        <dbReference type="ChEBI" id="CHEBI:30616"/>
        <dbReference type="ChEBI" id="CHEBI:43474"/>
        <dbReference type="ChEBI" id="CHEBI:58359"/>
        <dbReference type="ChEBI" id="CHEBI:78520"/>
        <dbReference type="ChEBI" id="CHEBI:78521"/>
        <dbReference type="ChEBI" id="CHEBI:456216"/>
    </reaction>
</comment>
<comment type="catalytic activity">
    <reaction evidence="1">
        <text>L-aspartyl-tRNA(Asn) + L-glutamine + ATP + H2O = L-asparaginyl-tRNA(Asn) + L-glutamate + ADP + phosphate + 2 H(+)</text>
        <dbReference type="Rhea" id="RHEA:14513"/>
        <dbReference type="Rhea" id="RHEA-COMP:9674"/>
        <dbReference type="Rhea" id="RHEA-COMP:9677"/>
        <dbReference type="ChEBI" id="CHEBI:15377"/>
        <dbReference type="ChEBI" id="CHEBI:15378"/>
        <dbReference type="ChEBI" id="CHEBI:29985"/>
        <dbReference type="ChEBI" id="CHEBI:30616"/>
        <dbReference type="ChEBI" id="CHEBI:43474"/>
        <dbReference type="ChEBI" id="CHEBI:58359"/>
        <dbReference type="ChEBI" id="CHEBI:78515"/>
        <dbReference type="ChEBI" id="CHEBI:78516"/>
        <dbReference type="ChEBI" id="CHEBI:456216"/>
    </reaction>
</comment>
<comment type="subunit">
    <text evidence="1">Heterotrimer of A, B and C subunits.</text>
</comment>
<comment type="similarity">
    <text evidence="1">Belongs to the GatC family.</text>
</comment>